<comment type="function">
    <text evidence="1 6 7">Probably forms vertices in the bacterial microcompartment (BMC) shell dedicated to ethanolamine degradation. Expression of eutK, eutL, eutM, eutN, eutS (eutSMNLK) in E.coli leads to formation of a single BMC (PubMed:22428024, PubMed:27063436). Coexpression of eutQ with eutSMNLK permits E.coli to make cells with more than one mobile BMC, as is usual in vivo (PubMed:27063436). It may be involved in transporting positively charged molecules into and out of the BMC (By similarity).</text>
</comment>
<comment type="function">
    <text evidence="4 5 13 14 15 16">The ethanolamine (EA) catabolic bacterial microcompartment (BMC) probably concentrates low levels of ethanolamine catabolic enzymes, concentrates volatile reaction intermediates, keeps the level of toxic acetaldehyde low, generates enough acetyl-CoA to support cell growth, and maintains a pool of free coenzyme A (CoA) and NAD.</text>
</comment>
<comment type="function">
    <text evidence="8 9">Expression of the eut operon allows this bacteria to use ethanolamine (EA) as a carbon, nitrogen and energy source. It relies on cobalamin (vitamin B12) both as a cofactor for the ethanolamine ammonia-lyase (EAL) activity and to induce the operon (PubMed:3045078). EA enhances bacterial survival in macrophages in a concentration-dependent manner, suggesting it is an important nutrient during infection (PubMed:29531136).</text>
</comment>
<comment type="pathway">
    <text evidence="9">Amine and polyamine degradation; ethanolamine degradation.</text>
</comment>
<comment type="subunit">
    <text evidence="2">Homopentamer with a small central pore.</text>
</comment>
<comment type="subcellular location">
    <subcellularLocation>
        <location evidence="1">Bacterial microcompartment</location>
    </subcellularLocation>
</comment>
<comment type="induction">
    <text evidence="9">Part of the 17-gene eut operon transcribed from a single promoter, induced by ethanolamine and adenosylcobalamin (AdoCbl, vitamin B12).</text>
</comment>
<comment type="disruption phenotype">
    <text evidence="4 5">A double eutM-eutN strain grows as well as wild-type on ethanolamine (EA) and cyanocobalamin, but a quadruple eutL-eutK-eutM-eutN strain does not grow (PubMed:16291677). A non-polar deletion mutant grows on EA at pH 5.5 to pH 7.0 but not at pH 8.0 or pH 8.5, releases increased amounts of acetaldehyde on EA plus vitamin B12. Preventing acetaldehyde vapor loss allow growth up to pH 8.5 (PubMed:16585748).</text>
</comment>
<comment type="biotechnology">
    <text evidence="6 7">Artificial BMCs can be made in E.coli by expressing eutK, eutL, eutM, eutN, eutS (eutSMNLK) or eutS alone. Cargo proteins can be targeted to them and beta-galactosidase (lacZ) was active within the BMC, showing the BMC allows passage of substrate into the interior. This can lead to the development of tailored BMCs for specific metabolic reactions (PubMed:22428024). The addition of eutQ to the eutSMNLK construct results in biogenesis of multiple BMCs (PubMed:27063436).</text>
</comment>
<comment type="miscellaneous">
    <text evidence="4">The need for a bacterial microcompartment in EA metabolism can be bypassed by increasing the levels of EAL and an acetaldehyde dehydrogenase (not necessarily EutE).</text>
</comment>
<comment type="similarity">
    <text evidence="12">Belongs to the CcmL/EutN family.</text>
</comment>
<name>EUTN_SALTY</name>
<evidence type="ECO:0000250" key="1">
    <source>
        <dbReference type="UniProtKB" id="P0AEJ8"/>
    </source>
</evidence>
<evidence type="ECO:0000250" key="2">
    <source>
        <dbReference type="UniProtKB" id="P0DUM1"/>
    </source>
</evidence>
<evidence type="ECO:0000255" key="3">
    <source>
        <dbReference type="PROSITE-ProRule" id="PRU01280"/>
    </source>
</evidence>
<evidence type="ECO:0000269" key="4">
    <source>
    </source>
</evidence>
<evidence type="ECO:0000269" key="5">
    <source>
    </source>
</evidence>
<evidence type="ECO:0000269" key="6">
    <source>
    </source>
</evidence>
<evidence type="ECO:0000269" key="7">
    <source>
    </source>
</evidence>
<evidence type="ECO:0000269" key="8">
    <source>
    </source>
</evidence>
<evidence type="ECO:0000269" key="9">
    <source>
    </source>
</evidence>
<evidence type="ECO:0000303" key="10">
    <source>
    </source>
</evidence>
<evidence type="ECO:0000303" key="11">
    <source>
    </source>
</evidence>
<evidence type="ECO:0000305" key="12"/>
<evidence type="ECO:0000305" key="13">
    <source>
    </source>
</evidence>
<evidence type="ECO:0000305" key="14">
    <source>
    </source>
</evidence>
<evidence type="ECO:0000305" key="15">
    <source>
    </source>
</evidence>
<evidence type="ECO:0000305" key="16">
    <source>
    </source>
</evidence>
<dbReference type="EMBL" id="U18560">
    <property type="protein sequence ID" value="AAA80208.1"/>
    <property type="molecule type" value="Genomic_DNA"/>
</dbReference>
<dbReference type="EMBL" id="AF093749">
    <property type="protein sequence ID" value="AAC78117.1"/>
    <property type="molecule type" value="Genomic_DNA"/>
</dbReference>
<dbReference type="EMBL" id="AE006468">
    <property type="protein sequence ID" value="AAL21358.1"/>
    <property type="molecule type" value="Genomic_DNA"/>
</dbReference>
<dbReference type="RefSeq" id="NP_461399.3">
    <property type="nucleotide sequence ID" value="NC_003197.2"/>
</dbReference>
<dbReference type="RefSeq" id="WP_000387009.1">
    <property type="nucleotide sequence ID" value="NC_003197.2"/>
</dbReference>
<dbReference type="SMR" id="P41792"/>
<dbReference type="STRING" id="99287.STM2464"/>
<dbReference type="TCDB" id="1.S.5.1.2">
    <property type="family name" value="the bacterial microcompartment shell/pore-forming protein 5 (pfam00936) (bmc-sp5) family"/>
</dbReference>
<dbReference type="PaxDb" id="99287-STM2464"/>
<dbReference type="GeneID" id="1253986"/>
<dbReference type="KEGG" id="stm:STM2464"/>
<dbReference type="HOGENOM" id="CLU_148498_0_1_6"/>
<dbReference type="PhylomeDB" id="P41792"/>
<dbReference type="BioCyc" id="SENT99287:STM2464-MONOMER"/>
<dbReference type="UniPathway" id="UPA00560"/>
<dbReference type="Proteomes" id="UP000001014">
    <property type="component" value="Chromosome"/>
</dbReference>
<dbReference type="GO" id="GO:0031469">
    <property type="term" value="C:bacterial microcompartment"/>
    <property type="evidence" value="ECO:0007669"/>
    <property type="project" value="UniProtKB-SubCell"/>
</dbReference>
<dbReference type="GO" id="GO:0046336">
    <property type="term" value="P:ethanolamine catabolic process"/>
    <property type="evidence" value="ECO:0007669"/>
    <property type="project" value="UniProtKB-UniPathway"/>
</dbReference>
<dbReference type="GO" id="GO:0006091">
    <property type="term" value="P:generation of precursor metabolites and energy"/>
    <property type="evidence" value="ECO:0000304"/>
    <property type="project" value="UniProtKB"/>
</dbReference>
<dbReference type="CDD" id="cd01614">
    <property type="entry name" value="EutN_CcmL"/>
    <property type="match status" value="1"/>
</dbReference>
<dbReference type="FunFam" id="2.40.50.220:FF:000001">
    <property type="entry name" value="Ethanolamine utilization microcompartment protein EutN"/>
    <property type="match status" value="1"/>
</dbReference>
<dbReference type="Gene3D" id="2.40.50.220">
    <property type="entry name" value="EutN/Ccml"/>
    <property type="match status" value="1"/>
</dbReference>
<dbReference type="InterPro" id="IPR004992">
    <property type="entry name" value="EutN_CcmL"/>
</dbReference>
<dbReference type="InterPro" id="IPR036677">
    <property type="entry name" value="EutN_CcmL_sf"/>
</dbReference>
<dbReference type="NCBIfam" id="NF011992">
    <property type="entry name" value="PRK15448.1"/>
    <property type="match status" value="1"/>
</dbReference>
<dbReference type="PANTHER" id="PTHR36539:SF1">
    <property type="entry name" value="BACTERIAL MICROCOMPARTMENT SHELL VERTEX PROTEIN EUTN"/>
    <property type="match status" value="1"/>
</dbReference>
<dbReference type="PANTHER" id="PTHR36539">
    <property type="entry name" value="ETHANOLAMINE UTILIZATION PROTEIN EUTN"/>
    <property type="match status" value="1"/>
</dbReference>
<dbReference type="Pfam" id="PF03319">
    <property type="entry name" value="EutN_CcmL"/>
    <property type="match status" value="1"/>
</dbReference>
<dbReference type="SUPFAM" id="SSF159133">
    <property type="entry name" value="EutN/CcmL-like"/>
    <property type="match status" value="1"/>
</dbReference>
<dbReference type="PROSITE" id="PS51932">
    <property type="entry name" value="BMV"/>
    <property type="match status" value="1"/>
</dbReference>
<protein>
    <recommendedName>
        <fullName evidence="12">Bacterial microcompartment shell vertex protein EutN</fullName>
    </recommendedName>
    <alternativeName>
        <fullName evidence="12">Ethanolamine catabolic microcompartment shell protein EutN</fullName>
    </alternativeName>
    <alternativeName>
        <fullName>Ethanolamine utilization protein EutN</fullName>
    </alternativeName>
</protein>
<proteinExistence type="evidence at protein level"/>
<reference key="1">
    <citation type="journal article" date="1995" name="J. Bacteriol.">
        <title>Ethanolamine utilization in Salmonella typhimurium: nucleotide sequence, protein expression, and mutational analysis of the cchA cchB eutE eutJ eutG eutH gene cluster.</title>
        <authorList>
            <person name="Stojiljkovic I."/>
            <person name="Baeumler A.J."/>
            <person name="Heffron F."/>
        </authorList>
    </citation>
    <scope>NUCLEOTIDE SEQUENCE [GENOMIC DNA]</scope>
    <scope>POSSIBLE FUNCTION</scope>
    <source>
        <strain>ATCC 14028s / SGSG 2262</strain>
    </source>
</reference>
<reference key="2">
    <citation type="journal article" date="1999" name="J. Bacteriol.">
        <title>The 17-gene ethanolamine (eut) operon of Salmonella typhimurium encodes five homologues of carboxysome shell proteins.</title>
        <authorList>
            <person name="Kofoid E.C."/>
            <person name="Rappleye C.A."/>
            <person name="Stojiljkovic I."/>
            <person name="Roth J.R."/>
        </authorList>
    </citation>
    <scope>NUCLEOTIDE SEQUENCE [GENOMIC DNA]</scope>
    <scope>POSSIBLE FUNCTION</scope>
    <source>
        <strain>LT2</strain>
    </source>
</reference>
<reference key="3">
    <citation type="journal article" date="2001" name="Nature">
        <title>Complete genome sequence of Salmonella enterica serovar Typhimurium LT2.</title>
        <authorList>
            <person name="McClelland M."/>
            <person name="Sanderson K.E."/>
            <person name="Spieth J."/>
            <person name="Clifton S.W."/>
            <person name="Latreille P."/>
            <person name="Courtney L."/>
            <person name="Porwollik S."/>
            <person name="Ali J."/>
            <person name="Dante M."/>
            <person name="Du F."/>
            <person name="Hou S."/>
            <person name="Layman D."/>
            <person name="Leonard S."/>
            <person name="Nguyen C."/>
            <person name="Scott K."/>
            <person name="Holmes A."/>
            <person name="Grewal N."/>
            <person name="Mulvaney E."/>
            <person name="Ryan E."/>
            <person name="Sun H."/>
            <person name="Florea L."/>
            <person name="Miller W."/>
            <person name="Stoneking T."/>
            <person name="Nhan M."/>
            <person name="Waterston R."/>
            <person name="Wilson R.K."/>
        </authorList>
    </citation>
    <scope>NUCLEOTIDE SEQUENCE [LARGE SCALE GENOMIC DNA]</scope>
    <source>
        <strain>LT2 / SGSC1412 / ATCC 700720</strain>
    </source>
</reference>
<reference key="4">
    <citation type="journal article" date="1988" name="J. Bacteriol.">
        <title>Ethanolamine utilization in Salmonella typhimurium.</title>
        <authorList>
            <person name="Roof D.M."/>
            <person name="Roth J.R."/>
        </authorList>
    </citation>
    <scope>FUNCTION</scope>
    <scope>PATHWAY</scope>
    <scope>OPERON</scope>
    <scope>INDUCTION BY ETHANOLAMINE AND COBALAMIN</scope>
    <source>
        <strain>LT2</strain>
    </source>
</reference>
<reference key="5">
    <citation type="journal article" date="2005" name="J. Bacteriol.">
        <title>Minimal functions and physiological conditions required for growth of salmonella enterica on ethanolamine in the absence of the metabolosome.</title>
        <authorList>
            <person name="Brinsmade S.R."/>
            <person name="Paldon T."/>
            <person name="Escalante-Semerena J.C."/>
        </authorList>
    </citation>
    <scope>FUNCTION</scope>
    <scope>DISRUPTION PHENOTYPE</scope>
    <source>
        <strain>LT2</strain>
    </source>
</reference>
<reference key="6">
    <citation type="journal article" date="2006" name="J. Bacteriol.">
        <title>Conserving a volatile metabolite: a role for carboxysome-like organelles in Salmonella enterica.</title>
        <authorList>
            <person name="Penrod J.T."/>
            <person name="Roth J.R."/>
        </authorList>
    </citation>
    <scope>FUNCTION</scope>
    <scope>DISRUPTION PHENOTYPE</scope>
    <source>
        <strain>LT2</strain>
    </source>
</reference>
<reference key="7">
    <citation type="journal article" date="2012" name="PLoS ONE">
        <title>Engineered protein nano-compartments for targeted enzyme localization.</title>
        <authorList>
            <person name="Choudhary S."/>
            <person name="Quin M.B."/>
            <person name="Sanders M.A."/>
            <person name="Johnson E.T."/>
            <person name="Schmidt-Dannert C."/>
        </authorList>
    </citation>
    <scope>FUNCTION</scope>
    <scope>SUBCELLULAR LOCATION</scope>
    <scope>BIOTECHNOLOGY</scope>
    <source>
        <strain>LT2</strain>
    </source>
</reference>
<reference key="8">
    <citation type="journal article" date="2013" name="J. Bacteriol.">
        <title>Evidence that a metabolic microcompartment contains and recycles private cofactor pools.</title>
        <authorList>
            <person name="Huseby D.L."/>
            <person name="Roth J.R."/>
        </authorList>
    </citation>
    <scope>FUNCTION</scope>
    <source>
        <strain>LT2</strain>
    </source>
</reference>
<reference key="9">
    <citation type="journal article" date="2016" name="Sci. Rep.">
        <title>Engineering formation of multiple recombinant Eut protein nanocompartments in E. coli.</title>
        <authorList>
            <person name="Held M."/>
            <person name="Kolb A."/>
            <person name="Perdue S."/>
            <person name="Hsu S.Y."/>
            <person name="Bloch S.E."/>
            <person name="Quin M.B."/>
            <person name="Schmidt-Dannert C."/>
        </authorList>
    </citation>
    <scope>FUNCTION</scope>
    <scope>BIOTECHNOLOGY</scope>
    <source>
        <strain>LT2</strain>
    </source>
</reference>
<reference key="10">
    <citation type="journal article" date="2018" name="Infect. Immun.">
        <title>The Ethanolamine Permease EutH Promotes Vacuole Adaptation of Salmonella enterica and Listeria monocytogenes during Macrophage Infection.</title>
        <authorList>
            <person name="Anderson C.J."/>
            <person name="Satkovich J."/>
            <person name="Koeseoglu V.K."/>
            <person name="Agaisse H."/>
            <person name="Kendall M.M."/>
        </authorList>
    </citation>
    <scope>FUNCTION</scope>
    <source>
        <strain>SL1344</strain>
    </source>
</reference>
<feature type="chain" id="PRO_0000087093" description="Bacterial microcompartment shell vertex protein EutN">
    <location>
        <begin position="1"/>
        <end position="99"/>
    </location>
</feature>
<feature type="domain" description="BMV" evidence="3">
    <location>
        <begin position="5"/>
        <end position="87"/>
    </location>
</feature>
<keyword id="KW-1283">Bacterial microcompartment</keyword>
<keyword id="KW-1185">Reference proteome</keyword>
<keyword id="KW-0843">Virulence</keyword>
<organism>
    <name type="scientific">Salmonella typhimurium (strain LT2 / SGSC1412 / ATCC 700720)</name>
    <dbReference type="NCBI Taxonomy" id="99287"/>
    <lineage>
        <taxon>Bacteria</taxon>
        <taxon>Pseudomonadati</taxon>
        <taxon>Pseudomonadota</taxon>
        <taxon>Gammaproteobacteria</taxon>
        <taxon>Enterobacterales</taxon>
        <taxon>Enterobacteriaceae</taxon>
        <taxon>Salmonella</taxon>
    </lineage>
</organism>
<accession>P41792</accession>
<sequence>MEADMKLAVVTGQIVCTVRHQGLAHDKLLMVEMIDAQGNPDGQCAVAIDSIGAGTGEWVLLVSGSSARQAHRSELSPVDLCVIGIVDEVVAGGKVVFHK</sequence>
<gene>
    <name evidence="10" type="primary">eutN</name>
    <name evidence="11" type="synonym">cchB</name>
    <name type="ordered locus">STM2464</name>
</gene>